<name>RS9_RHOBA</name>
<accession>Q7UEY4</accession>
<evidence type="ECO:0000255" key="1">
    <source>
        <dbReference type="HAMAP-Rule" id="MF_00532"/>
    </source>
</evidence>
<evidence type="ECO:0000256" key="2">
    <source>
        <dbReference type="SAM" id="MobiDB-lite"/>
    </source>
</evidence>
<evidence type="ECO:0000305" key="3"/>
<gene>
    <name evidence="1" type="primary">rpsI</name>
    <name type="ordered locus">RB10469</name>
</gene>
<comment type="similarity">
    <text evidence="1">Belongs to the universal ribosomal protein uS9 family.</text>
</comment>
<feature type="chain" id="PRO_0000111397" description="Small ribosomal subunit protein uS9">
    <location>
        <begin position="1"/>
        <end position="137"/>
    </location>
</feature>
<feature type="region of interest" description="Disordered" evidence="2">
    <location>
        <begin position="114"/>
        <end position="137"/>
    </location>
</feature>
<feature type="compositionally biased region" description="Basic residues" evidence="2">
    <location>
        <begin position="118"/>
        <end position="137"/>
    </location>
</feature>
<dbReference type="EMBL" id="BX294151">
    <property type="protein sequence ID" value="CAD78900.1"/>
    <property type="molecule type" value="Genomic_DNA"/>
</dbReference>
<dbReference type="RefSeq" id="NP_869443.1">
    <property type="nucleotide sequence ID" value="NC_005027.1"/>
</dbReference>
<dbReference type="RefSeq" id="WP_011122781.1">
    <property type="nucleotide sequence ID" value="NC_005027.1"/>
</dbReference>
<dbReference type="SMR" id="Q7UEY4"/>
<dbReference type="FunCoup" id="Q7UEY4">
    <property type="interactions" value="646"/>
</dbReference>
<dbReference type="STRING" id="243090.RB10469"/>
<dbReference type="EnsemblBacteria" id="CAD78900">
    <property type="protein sequence ID" value="CAD78900"/>
    <property type="gene ID" value="RB10469"/>
</dbReference>
<dbReference type="KEGG" id="rba:RB10469"/>
<dbReference type="PATRIC" id="fig|243090.15.peg.5062"/>
<dbReference type="eggNOG" id="COG0103">
    <property type="taxonomic scope" value="Bacteria"/>
</dbReference>
<dbReference type="HOGENOM" id="CLU_046483_2_1_0"/>
<dbReference type="InParanoid" id="Q7UEY4"/>
<dbReference type="OrthoDB" id="9803965at2"/>
<dbReference type="Proteomes" id="UP000001025">
    <property type="component" value="Chromosome"/>
</dbReference>
<dbReference type="GO" id="GO:0022627">
    <property type="term" value="C:cytosolic small ribosomal subunit"/>
    <property type="evidence" value="ECO:0000318"/>
    <property type="project" value="GO_Central"/>
</dbReference>
<dbReference type="GO" id="GO:0003723">
    <property type="term" value="F:RNA binding"/>
    <property type="evidence" value="ECO:0000318"/>
    <property type="project" value="GO_Central"/>
</dbReference>
<dbReference type="GO" id="GO:0003735">
    <property type="term" value="F:structural constituent of ribosome"/>
    <property type="evidence" value="ECO:0000318"/>
    <property type="project" value="GO_Central"/>
</dbReference>
<dbReference type="GO" id="GO:0006412">
    <property type="term" value="P:translation"/>
    <property type="evidence" value="ECO:0007669"/>
    <property type="project" value="UniProtKB-UniRule"/>
</dbReference>
<dbReference type="FunFam" id="3.30.230.10:FF:000001">
    <property type="entry name" value="30S ribosomal protein S9"/>
    <property type="match status" value="1"/>
</dbReference>
<dbReference type="Gene3D" id="3.30.230.10">
    <property type="match status" value="1"/>
</dbReference>
<dbReference type="HAMAP" id="MF_00532_B">
    <property type="entry name" value="Ribosomal_uS9_B"/>
    <property type="match status" value="1"/>
</dbReference>
<dbReference type="InterPro" id="IPR020568">
    <property type="entry name" value="Ribosomal_Su5_D2-typ_SF"/>
</dbReference>
<dbReference type="InterPro" id="IPR000754">
    <property type="entry name" value="Ribosomal_uS9"/>
</dbReference>
<dbReference type="InterPro" id="IPR023035">
    <property type="entry name" value="Ribosomal_uS9_bac/plastid"/>
</dbReference>
<dbReference type="InterPro" id="IPR020574">
    <property type="entry name" value="Ribosomal_uS9_CS"/>
</dbReference>
<dbReference type="InterPro" id="IPR014721">
    <property type="entry name" value="Ribsml_uS5_D2-typ_fold_subgr"/>
</dbReference>
<dbReference type="NCBIfam" id="NF001099">
    <property type="entry name" value="PRK00132.1"/>
    <property type="match status" value="1"/>
</dbReference>
<dbReference type="PANTHER" id="PTHR21569">
    <property type="entry name" value="RIBOSOMAL PROTEIN S9"/>
    <property type="match status" value="1"/>
</dbReference>
<dbReference type="PANTHER" id="PTHR21569:SF1">
    <property type="entry name" value="SMALL RIBOSOMAL SUBUNIT PROTEIN US9M"/>
    <property type="match status" value="1"/>
</dbReference>
<dbReference type="Pfam" id="PF00380">
    <property type="entry name" value="Ribosomal_S9"/>
    <property type="match status" value="1"/>
</dbReference>
<dbReference type="SUPFAM" id="SSF54211">
    <property type="entry name" value="Ribosomal protein S5 domain 2-like"/>
    <property type="match status" value="1"/>
</dbReference>
<dbReference type="PROSITE" id="PS00360">
    <property type="entry name" value="RIBOSOMAL_S9"/>
    <property type="match status" value="1"/>
</dbReference>
<organism>
    <name type="scientific">Rhodopirellula baltica (strain DSM 10527 / NCIMB 13988 / SH1)</name>
    <dbReference type="NCBI Taxonomy" id="243090"/>
    <lineage>
        <taxon>Bacteria</taxon>
        <taxon>Pseudomonadati</taxon>
        <taxon>Planctomycetota</taxon>
        <taxon>Planctomycetia</taxon>
        <taxon>Pirellulales</taxon>
        <taxon>Pirellulaceae</taxon>
        <taxon>Rhodopirellula</taxon>
    </lineage>
</organism>
<sequence length="137" mass="14967">MIAVKKDKINGDALGTGRRKSSVARVRVRPGSGKITINGKSIEEYFVNDQHRYAITETLEAAGLTESVDLLIRVSGGGMTGQAGAVRMGLARALCSHDEALHDPMREGSFLTRDSRMKERKKPGLRGARRGVQFSKR</sequence>
<keyword id="KW-1185">Reference proteome</keyword>
<keyword id="KW-0687">Ribonucleoprotein</keyword>
<keyword id="KW-0689">Ribosomal protein</keyword>
<proteinExistence type="inferred from homology"/>
<protein>
    <recommendedName>
        <fullName evidence="1">Small ribosomal subunit protein uS9</fullName>
    </recommendedName>
    <alternativeName>
        <fullName evidence="3">30S ribosomal protein S9</fullName>
    </alternativeName>
</protein>
<reference key="1">
    <citation type="journal article" date="2003" name="Proc. Natl. Acad. Sci. U.S.A.">
        <title>Complete genome sequence of the marine planctomycete Pirellula sp. strain 1.</title>
        <authorList>
            <person name="Gloeckner F.O."/>
            <person name="Kube M."/>
            <person name="Bauer M."/>
            <person name="Teeling H."/>
            <person name="Lombardot T."/>
            <person name="Ludwig W."/>
            <person name="Gade D."/>
            <person name="Beck A."/>
            <person name="Borzym K."/>
            <person name="Heitmann K."/>
            <person name="Rabus R."/>
            <person name="Schlesner H."/>
            <person name="Amann R."/>
            <person name="Reinhardt R."/>
        </authorList>
    </citation>
    <scope>NUCLEOTIDE SEQUENCE [LARGE SCALE GENOMIC DNA]</scope>
    <source>
        <strain>DSM 10527 / NCIMB 13988 / SH1</strain>
    </source>
</reference>